<proteinExistence type="inferred from homology"/>
<evidence type="ECO:0000255" key="1">
    <source>
        <dbReference type="HAMAP-Rule" id="MF_01063"/>
    </source>
</evidence>
<protein>
    <recommendedName>
        <fullName evidence="1">Esterase FrsA</fullName>
        <ecNumber evidence="1">3.1.1.1</ecNumber>
    </recommendedName>
</protein>
<dbReference type="EC" id="3.1.1.1" evidence="1"/>
<dbReference type="EMBL" id="CU928160">
    <property type="protein sequence ID" value="CAQ97152.1"/>
    <property type="molecule type" value="Genomic_DNA"/>
</dbReference>
<dbReference type="RefSeq" id="WP_000189543.1">
    <property type="nucleotide sequence ID" value="NC_011741.1"/>
</dbReference>
<dbReference type="SMR" id="B7M268"/>
<dbReference type="ESTHER" id="ecoli-yafa">
    <property type="family name" value="Duf_1100-R"/>
</dbReference>
<dbReference type="KEGG" id="ecr:ECIAI1_0278"/>
<dbReference type="HOGENOM" id="CLU_036819_0_0_6"/>
<dbReference type="GO" id="GO:0106435">
    <property type="term" value="F:carboxylesterase activity"/>
    <property type="evidence" value="ECO:0007669"/>
    <property type="project" value="UniProtKB-EC"/>
</dbReference>
<dbReference type="FunFam" id="3.40.50.1820:FF:000022">
    <property type="entry name" value="Esterase FrsA"/>
    <property type="match status" value="1"/>
</dbReference>
<dbReference type="Gene3D" id="3.40.50.1820">
    <property type="entry name" value="alpha/beta hydrolase"/>
    <property type="match status" value="1"/>
</dbReference>
<dbReference type="HAMAP" id="MF_01063">
    <property type="entry name" value="FrsA"/>
    <property type="match status" value="1"/>
</dbReference>
<dbReference type="InterPro" id="IPR029058">
    <property type="entry name" value="AB_hydrolase_fold"/>
</dbReference>
<dbReference type="InterPro" id="IPR043423">
    <property type="entry name" value="FrsA"/>
</dbReference>
<dbReference type="InterPro" id="IPR010520">
    <property type="entry name" value="FrsA-like"/>
</dbReference>
<dbReference type="InterPro" id="IPR050261">
    <property type="entry name" value="FrsA_esterase"/>
</dbReference>
<dbReference type="NCBIfam" id="NF003460">
    <property type="entry name" value="PRK05077.1"/>
    <property type="match status" value="1"/>
</dbReference>
<dbReference type="PANTHER" id="PTHR22946">
    <property type="entry name" value="DIENELACTONE HYDROLASE DOMAIN-CONTAINING PROTEIN-RELATED"/>
    <property type="match status" value="1"/>
</dbReference>
<dbReference type="PANTHER" id="PTHR22946:SF4">
    <property type="entry name" value="ESTERASE FRSA"/>
    <property type="match status" value="1"/>
</dbReference>
<dbReference type="Pfam" id="PF06500">
    <property type="entry name" value="FrsA-like"/>
    <property type="match status" value="1"/>
</dbReference>
<dbReference type="SUPFAM" id="SSF53474">
    <property type="entry name" value="alpha/beta-Hydrolases"/>
    <property type="match status" value="1"/>
</dbReference>
<sequence>MTQANLSETLFKPRFKHPETSTLVRRFNHGAQPPVQSALDGKTIPHWYRMINRLMWIWRGIDPREILDVQARIVMSDAERTDDDLYDTVIGYRGGNWIYEWATQAMVWQQKACAEEDPQLSGRHWLHAATLYNIAAYPHLKGDDLAEQAQALSNRAYEEAAQRLPGTMRQMEFTVPGGAPITGFLHMPKGDGPFPTVLMCGGLDAMQTDYYSLYERYFAPRGIAMLTIDMPSVGFSSKWKLTQDSSLLHQHVLKALPNVPWVDHTRVAAFGFRFGANVAVRLAYLESPRLKAVACLGPVVHTLLSDFKCQQQVPEMYLDVLASRLGMHDASDEALRVELNRYSLKVQGLLGRRCPTPMLSGYWKNDPFSPEEDSRLITSSSADGKLLEIPFNPVYRNFDKGLQEITGWIEKRLC</sequence>
<keyword id="KW-0378">Hydrolase</keyword>
<keyword id="KW-0719">Serine esterase</keyword>
<feature type="chain" id="PRO_1000136512" description="Esterase FrsA">
    <location>
        <begin position="1"/>
        <end position="414"/>
    </location>
</feature>
<name>FRSA_ECO8A</name>
<gene>
    <name evidence="1" type="primary">frsA</name>
    <name type="ordered locus">ECIAI1_0278</name>
</gene>
<reference key="1">
    <citation type="journal article" date="2009" name="PLoS Genet.">
        <title>Organised genome dynamics in the Escherichia coli species results in highly diverse adaptive paths.</title>
        <authorList>
            <person name="Touchon M."/>
            <person name="Hoede C."/>
            <person name="Tenaillon O."/>
            <person name="Barbe V."/>
            <person name="Baeriswyl S."/>
            <person name="Bidet P."/>
            <person name="Bingen E."/>
            <person name="Bonacorsi S."/>
            <person name="Bouchier C."/>
            <person name="Bouvet O."/>
            <person name="Calteau A."/>
            <person name="Chiapello H."/>
            <person name="Clermont O."/>
            <person name="Cruveiller S."/>
            <person name="Danchin A."/>
            <person name="Diard M."/>
            <person name="Dossat C."/>
            <person name="Karoui M.E."/>
            <person name="Frapy E."/>
            <person name="Garry L."/>
            <person name="Ghigo J.M."/>
            <person name="Gilles A.M."/>
            <person name="Johnson J."/>
            <person name="Le Bouguenec C."/>
            <person name="Lescat M."/>
            <person name="Mangenot S."/>
            <person name="Martinez-Jehanne V."/>
            <person name="Matic I."/>
            <person name="Nassif X."/>
            <person name="Oztas S."/>
            <person name="Petit M.A."/>
            <person name="Pichon C."/>
            <person name="Rouy Z."/>
            <person name="Ruf C.S."/>
            <person name="Schneider D."/>
            <person name="Tourret J."/>
            <person name="Vacherie B."/>
            <person name="Vallenet D."/>
            <person name="Medigue C."/>
            <person name="Rocha E.P.C."/>
            <person name="Denamur E."/>
        </authorList>
    </citation>
    <scope>NUCLEOTIDE SEQUENCE [LARGE SCALE GENOMIC DNA]</scope>
    <source>
        <strain>IAI1</strain>
    </source>
</reference>
<organism>
    <name type="scientific">Escherichia coli O8 (strain IAI1)</name>
    <dbReference type="NCBI Taxonomy" id="585034"/>
    <lineage>
        <taxon>Bacteria</taxon>
        <taxon>Pseudomonadati</taxon>
        <taxon>Pseudomonadota</taxon>
        <taxon>Gammaproteobacteria</taxon>
        <taxon>Enterobacterales</taxon>
        <taxon>Enterobacteriaceae</taxon>
        <taxon>Escherichia</taxon>
    </lineage>
</organism>
<accession>B7M268</accession>
<comment type="function">
    <text evidence="1">Catalyzes the hydrolysis of esters.</text>
</comment>
<comment type="catalytic activity">
    <reaction evidence="1">
        <text>a carboxylic ester + H2O = an alcohol + a carboxylate + H(+)</text>
        <dbReference type="Rhea" id="RHEA:21164"/>
        <dbReference type="ChEBI" id="CHEBI:15377"/>
        <dbReference type="ChEBI" id="CHEBI:15378"/>
        <dbReference type="ChEBI" id="CHEBI:29067"/>
        <dbReference type="ChEBI" id="CHEBI:30879"/>
        <dbReference type="ChEBI" id="CHEBI:33308"/>
        <dbReference type="EC" id="3.1.1.1"/>
    </reaction>
</comment>
<comment type="similarity">
    <text evidence="1">Belongs to the FrsA family.</text>
</comment>